<feature type="chain" id="PRO_0000318564" description="Formate--tetrahydrofolate ligase">
    <location>
        <begin position="1"/>
        <end position="560"/>
    </location>
</feature>
<feature type="binding site" evidence="1">
    <location>
        <begin position="69"/>
        <end position="76"/>
    </location>
    <ligand>
        <name>ATP</name>
        <dbReference type="ChEBI" id="CHEBI:30616"/>
    </ligand>
</feature>
<accession>A8FEC9</accession>
<proteinExistence type="inferred from homology"/>
<comment type="catalytic activity">
    <reaction evidence="1">
        <text>(6S)-5,6,7,8-tetrahydrofolate + formate + ATP = (6R)-10-formyltetrahydrofolate + ADP + phosphate</text>
        <dbReference type="Rhea" id="RHEA:20221"/>
        <dbReference type="ChEBI" id="CHEBI:15740"/>
        <dbReference type="ChEBI" id="CHEBI:30616"/>
        <dbReference type="ChEBI" id="CHEBI:43474"/>
        <dbReference type="ChEBI" id="CHEBI:57453"/>
        <dbReference type="ChEBI" id="CHEBI:195366"/>
        <dbReference type="ChEBI" id="CHEBI:456216"/>
        <dbReference type="EC" id="6.3.4.3"/>
    </reaction>
</comment>
<comment type="pathway">
    <text evidence="1">One-carbon metabolism; tetrahydrofolate interconversion.</text>
</comment>
<comment type="similarity">
    <text evidence="1">Belongs to the formate--tetrahydrofolate ligase family.</text>
</comment>
<keyword id="KW-0067">ATP-binding</keyword>
<keyword id="KW-0436">Ligase</keyword>
<keyword id="KW-0547">Nucleotide-binding</keyword>
<keyword id="KW-0554">One-carbon metabolism</keyword>
<reference key="1">
    <citation type="journal article" date="2007" name="PLoS ONE">
        <title>Paradoxical DNA repair and peroxide resistance gene conservation in Bacillus pumilus SAFR-032.</title>
        <authorList>
            <person name="Gioia J."/>
            <person name="Yerrapragada S."/>
            <person name="Qin X."/>
            <person name="Jiang H."/>
            <person name="Igboeli O.C."/>
            <person name="Muzny D."/>
            <person name="Dugan-Rocha S."/>
            <person name="Ding Y."/>
            <person name="Hawes A."/>
            <person name="Liu W."/>
            <person name="Perez L."/>
            <person name="Kovar C."/>
            <person name="Dinh H."/>
            <person name="Lee S."/>
            <person name="Nazareth L."/>
            <person name="Blyth P."/>
            <person name="Holder M."/>
            <person name="Buhay C."/>
            <person name="Tirumalai M.R."/>
            <person name="Liu Y."/>
            <person name="Dasgupta I."/>
            <person name="Bokhetache L."/>
            <person name="Fujita M."/>
            <person name="Karouia F."/>
            <person name="Eswara Moorthy P."/>
            <person name="Siefert J."/>
            <person name="Uzman A."/>
            <person name="Buzumbo P."/>
            <person name="Verma A."/>
            <person name="Zwiya H."/>
            <person name="McWilliams B.D."/>
            <person name="Olowu A."/>
            <person name="Clinkenbeard K.D."/>
            <person name="Newcombe D."/>
            <person name="Golebiewski L."/>
            <person name="Petrosino J.F."/>
            <person name="Nicholson W.L."/>
            <person name="Fox G.E."/>
            <person name="Venkateswaran K."/>
            <person name="Highlander S.K."/>
            <person name="Weinstock G.M."/>
        </authorList>
    </citation>
    <scope>NUCLEOTIDE SEQUENCE [LARGE SCALE GENOMIC DNA]</scope>
    <source>
        <strain>SAFR-032</strain>
    </source>
</reference>
<gene>
    <name evidence="1" type="primary">fhs</name>
    <name type="ordered locus">BPUM_1926</name>
</gene>
<organism>
    <name type="scientific">Bacillus pumilus (strain SAFR-032)</name>
    <dbReference type="NCBI Taxonomy" id="315750"/>
    <lineage>
        <taxon>Bacteria</taxon>
        <taxon>Bacillati</taxon>
        <taxon>Bacillota</taxon>
        <taxon>Bacilli</taxon>
        <taxon>Bacillales</taxon>
        <taxon>Bacillaceae</taxon>
        <taxon>Bacillus</taxon>
    </lineage>
</organism>
<sequence length="560" mass="60467">MITKHLSDIDIAQQAKLRPIQDIAAKLQLHDEELECYGFTKAKISLTIFDRLKEQKEGHVILVTSINPTPAGEGKSTVTVGLGQAFEKIGKKAIIAMREPSLGPTMGIKGGAAGGGYSQVLPMEEINLHFTGDFHAITSAHNALSAFIDNHIHHGNELDIDARRIVWKRVLDLNDRALRQVVVGLGGQVNGYPREDGFDITVASEMMAILCLAEDLTDLKKRLSSIVVAYNRDGEPVTVGALGYEGVLTLLLKDALKPNLVQTIEGTPALVHGGPFANIAHGCNSLIATKMAAKLADYVVTEAGFGADLGAEKFLNIKTRAGDFKPGAVVIVATVRALKMHGGMKKTELKEENTQAVLKGIHNLEKHIETVQAFGLPYIVAVNRFITDTKEEIQAIEDWCLAHDHPVKAVNVWEEGGEGGTALAEELTTLIEKKKNSFSYLYEEDDSIEEKLSKVAKVVYGADGVTLTSKARKQLAAIEENSWGHLPVCMAKTQYSLSDDPALIGRPKGFTITIRELKPSVGAGFIVALTGSILTMPGLPKKPAALEMDLLEDGSVTGLF</sequence>
<dbReference type="EC" id="6.3.4.3" evidence="1"/>
<dbReference type="EMBL" id="CP000813">
    <property type="protein sequence ID" value="ABV62596.1"/>
    <property type="molecule type" value="Genomic_DNA"/>
</dbReference>
<dbReference type="RefSeq" id="WP_012010314.1">
    <property type="nucleotide sequence ID" value="NC_009848.4"/>
</dbReference>
<dbReference type="SMR" id="A8FEC9"/>
<dbReference type="STRING" id="315750.BPUM_1926"/>
<dbReference type="GeneID" id="5621190"/>
<dbReference type="KEGG" id="bpu:BPUM_1926"/>
<dbReference type="eggNOG" id="COG2759">
    <property type="taxonomic scope" value="Bacteria"/>
</dbReference>
<dbReference type="HOGENOM" id="CLU_003601_3_3_9"/>
<dbReference type="OrthoDB" id="9761733at2"/>
<dbReference type="UniPathway" id="UPA00193"/>
<dbReference type="Proteomes" id="UP000001355">
    <property type="component" value="Chromosome"/>
</dbReference>
<dbReference type="GO" id="GO:0005524">
    <property type="term" value="F:ATP binding"/>
    <property type="evidence" value="ECO:0007669"/>
    <property type="project" value="UniProtKB-UniRule"/>
</dbReference>
<dbReference type="GO" id="GO:0004329">
    <property type="term" value="F:formate-tetrahydrofolate ligase activity"/>
    <property type="evidence" value="ECO:0007669"/>
    <property type="project" value="UniProtKB-UniRule"/>
</dbReference>
<dbReference type="GO" id="GO:0035999">
    <property type="term" value="P:tetrahydrofolate interconversion"/>
    <property type="evidence" value="ECO:0007669"/>
    <property type="project" value="UniProtKB-UniRule"/>
</dbReference>
<dbReference type="CDD" id="cd00477">
    <property type="entry name" value="FTHFS"/>
    <property type="match status" value="1"/>
</dbReference>
<dbReference type="FunFam" id="3.30.1510.10:FF:000001">
    <property type="entry name" value="Formate--tetrahydrofolate ligase"/>
    <property type="match status" value="1"/>
</dbReference>
<dbReference type="FunFam" id="3.10.410.10:FF:000001">
    <property type="entry name" value="Putative formate--tetrahydrofolate ligase"/>
    <property type="match status" value="1"/>
</dbReference>
<dbReference type="Gene3D" id="3.30.1510.10">
    <property type="entry name" value="Domain 2, N(10)-formyltetrahydrofolate synthetase"/>
    <property type="match status" value="1"/>
</dbReference>
<dbReference type="Gene3D" id="3.10.410.10">
    <property type="entry name" value="Formyltetrahydrofolate synthetase, domain 3"/>
    <property type="match status" value="1"/>
</dbReference>
<dbReference type="Gene3D" id="3.40.50.300">
    <property type="entry name" value="P-loop containing nucleotide triphosphate hydrolases"/>
    <property type="match status" value="1"/>
</dbReference>
<dbReference type="HAMAP" id="MF_01543">
    <property type="entry name" value="FTHFS"/>
    <property type="match status" value="1"/>
</dbReference>
<dbReference type="InterPro" id="IPR000559">
    <property type="entry name" value="Formate_THF_ligase"/>
</dbReference>
<dbReference type="InterPro" id="IPR020628">
    <property type="entry name" value="Formate_THF_ligase_CS"/>
</dbReference>
<dbReference type="InterPro" id="IPR027417">
    <property type="entry name" value="P-loop_NTPase"/>
</dbReference>
<dbReference type="NCBIfam" id="NF010030">
    <property type="entry name" value="PRK13505.1"/>
    <property type="match status" value="1"/>
</dbReference>
<dbReference type="Pfam" id="PF01268">
    <property type="entry name" value="FTHFS"/>
    <property type="match status" value="1"/>
</dbReference>
<dbReference type="SUPFAM" id="SSF52540">
    <property type="entry name" value="P-loop containing nucleoside triphosphate hydrolases"/>
    <property type="match status" value="1"/>
</dbReference>
<dbReference type="PROSITE" id="PS00721">
    <property type="entry name" value="FTHFS_1"/>
    <property type="match status" value="1"/>
</dbReference>
<dbReference type="PROSITE" id="PS00722">
    <property type="entry name" value="FTHFS_2"/>
    <property type="match status" value="1"/>
</dbReference>
<evidence type="ECO:0000255" key="1">
    <source>
        <dbReference type="HAMAP-Rule" id="MF_01543"/>
    </source>
</evidence>
<protein>
    <recommendedName>
        <fullName evidence="1">Formate--tetrahydrofolate ligase</fullName>
        <ecNumber evidence="1">6.3.4.3</ecNumber>
    </recommendedName>
    <alternativeName>
        <fullName evidence="1">Formyltetrahydrofolate synthetase</fullName>
        <shortName evidence="1">FHS</shortName>
        <shortName evidence="1">FTHFS</shortName>
    </alternativeName>
</protein>
<name>FTHS_BACP2</name>